<dbReference type="EMBL" id="AJ277756">
    <property type="protein sequence ID" value="CAC33485.1"/>
    <property type="molecule type" value="Genomic_DNA"/>
</dbReference>
<dbReference type="EMBL" id="X55453">
    <property type="status" value="NOT_ANNOTATED_CDS"/>
    <property type="molecule type" value="Genomic_DNA"/>
</dbReference>
<dbReference type="RefSeq" id="WP_010947526.1">
    <property type="nucleotide sequence ID" value="NZ_UGOV01000002.1"/>
</dbReference>
<dbReference type="SMR" id="P37864"/>
<dbReference type="STRING" id="91892.BIZ52_08620"/>
<dbReference type="GeneID" id="57035792"/>
<dbReference type="eggNOG" id="COG2137">
    <property type="taxonomic scope" value="Bacteria"/>
</dbReference>
<dbReference type="OMA" id="EPQDWFE"/>
<dbReference type="GO" id="GO:0005737">
    <property type="term" value="C:cytoplasm"/>
    <property type="evidence" value="ECO:0007669"/>
    <property type="project" value="UniProtKB-SubCell"/>
</dbReference>
<dbReference type="GO" id="GO:0006282">
    <property type="term" value="P:regulation of DNA repair"/>
    <property type="evidence" value="ECO:0007669"/>
    <property type="project" value="UniProtKB-UniRule"/>
</dbReference>
<dbReference type="Gene3D" id="1.10.10.10">
    <property type="entry name" value="Winged helix-like DNA-binding domain superfamily/Winged helix DNA-binding domain"/>
    <property type="match status" value="3"/>
</dbReference>
<dbReference type="HAMAP" id="MF_01114">
    <property type="entry name" value="RecX"/>
    <property type="match status" value="1"/>
</dbReference>
<dbReference type="InterPro" id="IPR053926">
    <property type="entry name" value="RecX_HTH_1st"/>
</dbReference>
<dbReference type="InterPro" id="IPR053924">
    <property type="entry name" value="RecX_HTH_2nd"/>
</dbReference>
<dbReference type="InterPro" id="IPR053925">
    <property type="entry name" value="RecX_HTH_3rd"/>
</dbReference>
<dbReference type="InterPro" id="IPR003783">
    <property type="entry name" value="Regulatory_RecX"/>
</dbReference>
<dbReference type="InterPro" id="IPR036388">
    <property type="entry name" value="WH-like_DNA-bd_sf"/>
</dbReference>
<dbReference type="NCBIfam" id="NF001057">
    <property type="entry name" value="PRK00117.3-3"/>
    <property type="match status" value="1"/>
</dbReference>
<dbReference type="PANTHER" id="PTHR33602">
    <property type="entry name" value="REGULATORY PROTEIN RECX FAMILY PROTEIN"/>
    <property type="match status" value="1"/>
</dbReference>
<dbReference type="PANTHER" id="PTHR33602:SF1">
    <property type="entry name" value="REGULATORY PROTEIN RECX FAMILY PROTEIN"/>
    <property type="match status" value="1"/>
</dbReference>
<dbReference type="Pfam" id="PF21982">
    <property type="entry name" value="RecX_HTH1"/>
    <property type="match status" value="1"/>
</dbReference>
<dbReference type="Pfam" id="PF02631">
    <property type="entry name" value="RecX_HTH2"/>
    <property type="match status" value="1"/>
</dbReference>
<dbReference type="Pfam" id="PF21981">
    <property type="entry name" value="RecX_HTH3"/>
    <property type="match status" value="1"/>
</dbReference>
<evidence type="ECO:0000250" key="1"/>
<evidence type="ECO:0000305" key="2"/>
<reference key="1">
    <citation type="journal article" date="2001" name="Mol. Microbiol.">
        <title>Chromosomal insertion and excision of a 30 kb unstable genetic element is responsible for phase variation of lipopolysaccharide and other virulence determinants in Legionella pneumophila.</title>
        <authorList>
            <person name="Lueneberg E."/>
            <person name="Mayer B."/>
            <person name="Daryab N."/>
            <person name="Kooistra O."/>
            <person name="Zaehringer U."/>
            <person name="Rohde M."/>
            <person name="Swanson J."/>
            <person name="Frosch M."/>
        </authorList>
    </citation>
    <scope>NUCLEOTIDE SEQUENCE [GENOMIC DNA]</scope>
    <source>
        <strain>ATCC 43109 / NCTC 12008 / RC1 / Olda / Serogroup 1</strain>
    </source>
</reference>
<reference key="2">
    <citation type="journal article" date="1990" name="FEMS Microbiol. Lett.">
        <title>Expression and nucleotide sequence analysis of the Legionella pneumophila recA gene.</title>
        <authorList>
            <person name="Zhao X."/>
            <person name="Dreyfus L.A."/>
        </authorList>
    </citation>
    <scope>NUCLEOTIDE SEQUENCE [GENOMIC DNA] OF 1-63</scope>
</reference>
<reference key="3">
    <citation type="journal article" date="1994" name="Nucleic Acids Res.">
        <title>A putative regulatory gene downstream of recA is conserved in Gram-negative and Gram-positive bacteria.</title>
        <authorList>
            <person name="de Mot R."/>
            <person name="Schoofs G."/>
            <person name="Vanderleyden J."/>
        </authorList>
    </citation>
    <scope>IDENTIFICATION</scope>
</reference>
<comment type="function">
    <text evidence="1">Modulates RecA activity.</text>
</comment>
<comment type="subcellular location">
    <subcellularLocation>
        <location evidence="2">Cytoplasm</location>
    </subcellularLocation>
</comment>
<comment type="similarity">
    <text evidence="2">Belongs to the RecX family.</text>
</comment>
<keyword id="KW-0963">Cytoplasm</keyword>
<protein>
    <recommendedName>
        <fullName>Regulatory protein RecX</fullName>
    </recommendedName>
</protein>
<name>RECX_LEGPN</name>
<gene>
    <name type="primary">recX</name>
</gene>
<organism>
    <name type="scientific">Legionella pneumophila</name>
    <dbReference type="NCBI Taxonomy" id="446"/>
    <lineage>
        <taxon>Bacteria</taxon>
        <taxon>Pseudomonadati</taxon>
        <taxon>Pseudomonadota</taxon>
        <taxon>Gammaproteobacteria</taxon>
        <taxon>Legionellales</taxon>
        <taxon>Legionellaceae</taxon>
        <taxon>Legionella</taxon>
    </lineage>
</organism>
<sequence>MTKAFDSALRLLTRREYSAMELCDKLKQKGFSTNDVQNALYECQRLGYQSDVRFVENYIRVRIHQGYGPLKIRQELKNKGIDPDLIQSVLHQEKDNWVNYALRAWEKKFKRQDDFSYSEIQKQQRFLLYRGFDRDVISKVFKEVKSSYLI</sequence>
<proteinExistence type="inferred from homology"/>
<feature type="chain" id="PRO_0000162443" description="Regulatory protein RecX">
    <location>
        <begin position="1"/>
        <end position="150"/>
    </location>
</feature>
<feature type="sequence conflict" description="In Ref. 2." evidence="2" ref="2">
    <original>SA</original>
    <variation>RP</variation>
    <location>
        <begin position="7"/>
        <end position="8"/>
    </location>
</feature>
<accession>P37864</accession>
<accession>Q9AKW0</accession>